<reference key="1">
    <citation type="journal article" date="1990" name="J. Bacteriol.">
        <title>Primary sequence of the Escherichia coli fadBA operon, encoding the fatty acid-oxidizing multienzyme complex, indicates a high degree of homology to eucaryotic enzymes.</title>
        <authorList>
            <person name="Dirusso C.C."/>
        </authorList>
    </citation>
    <scope>NUCLEOTIDE SEQUENCE [GENOMIC DNA]</scope>
</reference>
<reference key="2">
    <citation type="journal article" date="1990" name="J. Biol. Chem.">
        <title>Nucleotide sequence of the fadA gene. Primary structure of 3-ketoacyl-coenzyme A thiolase from Escherichia coli and the structural organization of the fadAB operon.</title>
        <authorList>
            <person name="Yang S.-Y."/>
            <person name="Yang X.-Y.H."/>
            <person name="Healy-Louie G."/>
            <person name="Schulz H."/>
            <person name="Elzinga M."/>
        </authorList>
    </citation>
    <scope>NUCLEOTIDE SEQUENCE [GENOMIC DNA]</scope>
    <scope>PROTEIN SEQUENCE OF 1-10</scope>
    <source>
        <strain>K12</strain>
    </source>
</reference>
<reference key="3">
    <citation type="journal article" date="1990" name="Nucleic Acids Res.">
        <title>Nucleotide sequence of the fadA and fadB genes from Escherichia coli.</title>
        <authorList>
            <person name="Nakahigashi K."/>
            <person name="Inokuchi H."/>
        </authorList>
    </citation>
    <scope>NUCLEOTIDE SEQUENCE [GENOMIC DNA]</scope>
    <source>
        <strain>K12 / W3110 / ATCC 27325 / DSM 5911</strain>
    </source>
</reference>
<reference key="4">
    <citation type="journal article" date="1992" name="Science">
        <title>Analysis of the Escherichia coli genome: DNA sequence of the region from 84.5 to 86.5 minutes.</title>
        <authorList>
            <person name="Daniels D.L."/>
            <person name="Plunkett G. III"/>
            <person name="Burland V.D."/>
            <person name="Blattner F.R."/>
        </authorList>
    </citation>
    <scope>NUCLEOTIDE SEQUENCE [LARGE SCALE GENOMIC DNA]</scope>
    <source>
        <strain>K12 / MG1655 / ATCC 47076</strain>
    </source>
</reference>
<reference key="5">
    <citation type="journal article" date="1997" name="Science">
        <title>The complete genome sequence of Escherichia coli K-12.</title>
        <authorList>
            <person name="Blattner F.R."/>
            <person name="Plunkett G. III"/>
            <person name="Bloch C.A."/>
            <person name="Perna N.T."/>
            <person name="Burland V."/>
            <person name="Riley M."/>
            <person name="Collado-Vides J."/>
            <person name="Glasner J.D."/>
            <person name="Rode C.K."/>
            <person name="Mayhew G.F."/>
            <person name="Gregor J."/>
            <person name="Davis N.W."/>
            <person name="Kirkpatrick H.A."/>
            <person name="Goeden M.A."/>
            <person name="Rose D.J."/>
            <person name="Mau B."/>
            <person name="Shao Y."/>
        </authorList>
    </citation>
    <scope>NUCLEOTIDE SEQUENCE [LARGE SCALE GENOMIC DNA]</scope>
    <source>
        <strain>K12 / MG1655 / ATCC 47076</strain>
    </source>
</reference>
<reference key="6">
    <citation type="journal article" date="2006" name="Nucleic Acids Res.">
        <title>Escherichia coli K-12: a cooperatively developed annotation snapshot -- 2005.</title>
        <authorList>
            <person name="Riley M."/>
            <person name="Abe T."/>
            <person name="Arnaud M.B."/>
            <person name="Berlyn M.K.B."/>
            <person name="Blattner F.R."/>
            <person name="Chaudhuri R.R."/>
            <person name="Glasner J.D."/>
            <person name="Horiuchi T."/>
            <person name="Keseler I.M."/>
            <person name="Kosuge T."/>
            <person name="Mori H."/>
            <person name="Perna N.T."/>
            <person name="Plunkett G. III"/>
            <person name="Rudd K.E."/>
            <person name="Serres M.H."/>
            <person name="Thomas G.H."/>
            <person name="Thomson N.R."/>
            <person name="Wishart D."/>
            <person name="Wanner B.L."/>
        </authorList>
    </citation>
    <scope>SEQUENCE REVISION TO 37</scope>
</reference>
<reference key="7">
    <citation type="journal article" date="2006" name="Mol. Syst. Biol.">
        <title>Highly accurate genome sequences of Escherichia coli K-12 strains MG1655 and W3110.</title>
        <authorList>
            <person name="Hayashi K."/>
            <person name="Morooka N."/>
            <person name="Yamamoto Y."/>
            <person name="Fujita K."/>
            <person name="Isono K."/>
            <person name="Choi S."/>
            <person name="Ohtsubo E."/>
            <person name="Baba T."/>
            <person name="Wanner B.L."/>
            <person name="Mori H."/>
            <person name="Horiuchi T."/>
        </authorList>
    </citation>
    <scope>NUCLEOTIDE SEQUENCE [LARGE SCALE GENOMIC DNA]</scope>
    <source>
        <strain>K12 / W3110 / ATCC 27325 / DSM 5911</strain>
    </source>
</reference>
<reference key="8">
    <citation type="journal article" date="1979" name="J. Bacteriol.">
        <title>Five different enzymatic activities are associated with the multienzyme complex of fatty acid oxidation from Escherichia coli.</title>
        <authorList>
            <person name="Pramanik A."/>
            <person name="Pawar S."/>
            <person name="Antonian E."/>
            <person name="Schulz H."/>
        </authorList>
    </citation>
    <scope>FUNCTION</scope>
    <scope>SUBUNIT</scope>
</reference>
<reference key="9">
    <citation type="journal article" date="1993" name="J. Biol. Chem.">
        <title>Association of both enoyl coenzyme A hydratase and 3-hydroxyacyl coenzyme A epimerase with an active site in the amino-terminal domain of the multifunctional fatty acid oxidation protein from Escherichia coli.</title>
        <authorList>
            <person name="Yang S.Y."/>
            <person name="Elzinga M."/>
        </authorList>
    </citation>
    <scope>FUNCTION</scope>
    <scope>CATALYTIC ACTIVITY</scope>
    <scope>BIOPHYSICOCHEMICAL PROPERTIES</scope>
</reference>
<reference key="10">
    <citation type="journal article" date="1997" name="Electrophoresis">
        <title>Escherichia coli proteome analysis using the gene-protein database.</title>
        <authorList>
            <person name="VanBogelen R.A."/>
            <person name="Abshire K.Z."/>
            <person name="Moldover B."/>
            <person name="Olson E.R."/>
            <person name="Neidhardt F.C."/>
        </authorList>
    </citation>
    <scope>IDENTIFICATION BY 2D-GEL</scope>
</reference>
<reference key="11">
    <citation type="journal article" date="2003" name="Mol. Microbiol.">
        <title>A new Escherichia coli metabolic competency: growth on fatty acids by a novel anaerobic beta-oxidation pathway.</title>
        <authorList>
            <person name="Campbell J.W."/>
            <person name="Morgan-Kiss R.M."/>
            <person name="Cronan J.E. Jr."/>
        </authorList>
    </citation>
    <scope>FUNCTION IN ANAEROBIC BETA-OXIDATION PATHWAY</scope>
    <source>
        <strain>K12 / MG1655 / ATCC 47076</strain>
    </source>
</reference>
<gene>
    <name type="primary">fadA</name>
    <name type="synonym">oldA</name>
    <name type="ordered locus">b3845</name>
    <name type="ordered locus">JW5578</name>
</gene>
<proteinExistence type="evidence at protein level"/>
<comment type="function">
    <text evidence="2 3 4">Catalyzes the final step of fatty acid oxidation in which acetyl-CoA is released and the CoA ester of a fatty acid two carbons shorter is formed. Involved in the aerobic and anaerobic degradation of long-chain fatty acids.</text>
</comment>
<comment type="catalytic activity">
    <reaction evidence="4">
        <text>an acyl-CoA + acetyl-CoA = a 3-oxoacyl-CoA + CoA</text>
        <dbReference type="Rhea" id="RHEA:21564"/>
        <dbReference type="ChEBI" id="CHEBI:57287"/>
        <dbReference type="ChEBI" id="CHEBI:57288"/>
        <dbReference type="ChEBI" id="CHEBI:58342"/>
        <dbReference type="ChEBI" id="CHEBI:90726"/>
        <dbReference type="EC" id="2.3.1.16"/>
    </reaction>
    <physiologicalReaction direction="right-to-left" evidence="4">
        <dbReference type="Rhea" id="RHEA:21566"/>
    </physiologicalReaction>
</comment>
<comment type="biophysicochemical properties">
    <kinetics>
        <KM evidence="4">96 uM for acetoacetyl-CoA</KM>
        <KM evidence="4">102 uM for CoASH</KM>
    </kinetics>
</comment>
<comment type="pathway">
    <text>Lipid metabolism; fatty acid beta-oxidation.</text>
</comment>
<comment type="subunit">
    <text evidence="3">Heterotetramer of two alpha chains (FadB) and two beta chains (FadA).</text>
</comment>
<comment type="subcellular location">
    <subcellularLocation>
        <location>Cytoplasm</location>
    </subcellularLocation>
</comment>
<comment type="induction">
    <text>Repressed by FadR in the absence of LCFAs (fatty acids of, at least, 12 carbon atoms). When LCFAs are present in the medium, they are converted to long-chain acyl-CoAs which bind to FadR resulting in its release from the DNA and thus derepression of the transcription.</text>
</comment>
<comment type="similarity">
    <text evidence="5">Belongs to the thiolase-like superfamily. Thiolase family.</text>
</comment>
<feature type="chain" id="PRO_0000206372" description="3-ketoacyl-CoA thiolase FadA">
    <location>
        <begin position="1"/>
        <end position="387"/>
    </location>
</feature>
<feature type="active site" description="Acyl-thioester intermediate" evidence="1">
    <location>
        <position position="91"/>
    </location>
</feature>
<feature type="active site" description="Proton acceptor" evidence="1">
    <location>
        <position position="343"/>
    </location>
</feature>
<feature type="active site" description="Proton acceptor" evidence="1">
    <location>
        <position position="373"/>
    </location>
</feature>
<feature type="sequence conflict" description="In Ref. 3; CAB40810 and 4; AAA67642." evidence="5" ref="3 4">
    <original>S</original>
    <variation>T</variation>
    <location>
        <position position="37"/>
    </location>
</feature>
<feature type="sequence conflict" description="In Ref. 3; CAB40810." evidence="5" ref="3">
    <original>E</original>
    <variation>G</variation>
    <location>
        <position position="119"/>
    </location>
</feature>
<feature type="sequence conflict" description="In Ref. 2; AA sequence." evidence="5" ref="2">
    <original>TMCI</original>
    <variation>DGCVS</variation>
    <location>
        <begin position="371"/>
        <end position="374"/>
    </location>
</feature>
<keyword id="KW-0012">Acyltransferase</keyword>
<keyword id="KW-0963">Cytoplasm</keyword>
<keyword id="KW-0903">Direct protein sequencing</keyword>
<keyword id="KW-0276">Fatty acid metabolism</keyword>
<keyword id="KW-0442">Lipid degradation</keyword>
<keyword id="KW-0443">Lipid metabolism</keyword>
<keyword id="KW-1185">Reference proteome</keyword>
<keyword id="KW-0808">Transferase</keyword>
<accession>P21151</accession>
<accession>P78130</accession>
<accession>Q2M8E8</accession>
<dbReference type="EC" id="2.3.1.16" evidence="4"/>
<dbReference type="EMBL" id="M59368">
    <property type="protein sequence ID" value="AAA23751.1"/>
    <property type="molecule type" value="Genomic_DNA"/>
</dbReference>
<dbReference type="EMBL" id="M74164">
    <property type="protein sequence ID" value="AAA62778.1"/>
    <property type="molecule type" value="Genomic_DNA"/>
</dbReference>
<dbReference type="EMBL" id="X52837">
    <property type="protein sequence ID" value="CAB40810.1"/>
    <property type="molecule type" value="Genomic_DNA"/>
</dbReference>
<dbReference type="EMBL" id="M87049">
    <property type="protein sequence ID" value="AAA67642.1"/>
    <property type="molecule type" value="Genomic_DNA"/>
</dbReference>
<dbReference type="EMBL" id="U00096">
    <property type="protein sequence ID" value="AAT48230.1"/>
    <property type="molecule type" value="Genomic_DNA"/>
</dbReference>
<dbReference type="EMBL" id="AP009048">
    <property type="protein sequence ID" value="BAE77458.1"/>
    <property type="molecule type" value="Genomic_DNA"/>
</dbReference>
<dbReference type="PIR" id="F65189">
    <property type="entry name" value="XUEC"/>
</dbReference>
<dbReference type="RefSeq" id="WP_000438725.1">
    <property type="nucleotide sequence ID" value="NZ_SSZK01000046.1"/>
</dbReference>
<dbReference type="RefSeq" id="YP_026272.1">
    <property type="nucleotide sequence ID" value="NC_000913.3"/>
</dbReference>
<dbReference type="SASBDB" id="P21151"/>
<dbReference type="SMR" id="P21151"/>
<dbReference type="BioGRID" id="4263456">
    <property type="interactions" value="168"/>
</dbReference>
<dbReference type="BioGRID" id="852621">
    <property type="interactions" value="1"/>
</dbReference>
<dbReference type="ComplexPortal" id="CPX-3964">
    <property type="entry name" value="fadBA fatty acid oxidation complex, aerobic conditions"/>
</dbReference>
<dbReference type="DIP" id="DIP-9559N"/>
<dbReference type="FunCoup" id="P21151">
    <property type="interactions" value="158"/>
</dbReference>
<dbReference type="STRING" id="511145.b3845"/>
<dbReference type="jPOST" id="P21151"/>
<dbReference type="PaxDb" id="511145-b3845"/>
<dbReference type="EnsemblBacteria" id="AAT48230">
    <property type="protein sequence ID" value="AAT48230"/>
    <property type="gene ID" value="b3845"/>
</dbReference>
<dbReference type="GeneID" id="948324"/>
<dbReference type="KEGG" id="ecj:JW5578"/>
<dbReference type="KEGG" id="eco:b3845"/>
<dbReference type="KEGG" id="ecoc:C3026_20790"/>
<dbReference type="PATRIC" id="fig|511145.12.peg.3959"/>
<dbReference type="EchoBASE" id="EB0274"/>
<dbReference type="eggNOG" id="COG0183">
    <property type="taxonomic scope" value="Bacteria"/>
</dbReference>
<dbReference type="HOGENOM" id="CLU_031026_2_2_6"/>
<dbReference type="InParanoid" id="P21151"/>
<dbReference type="OMA" id="RWCASSM"/>
<dbReference type="OrthoDB" id="9764638at2"/>
<dbReference type="PhylomeDB" id="P21151"/>
<dbReference type="BioCyc" id="EcoCyc:FADA-MONOMER"/>
<dbReference type="BioCyc" id="MetaCyc:FADA-MONOMER"/>
<dbReference type="BRENDA" id="2.3.1.16">
    <property type="organism ID" value="2026"/>
</dbReference>
<dbReference type="SABIO-RK" id="P21151"/>
<dbReference type="UniPathway" id="UPA00659"/>
<dbReference type="PRO" id="PR:P21151"/>
<dbReference type="Proteomes" id="UP000000625">
    <property type="component" value="Chromosome"/>
</dbReference>
<dbReference type="GO" id="GO:0005737">
    <property type="term" value="C:cytoplasm"/>
    <property type="evidence" value="ECO:0000314"/>
    <property type="project" value="EcoCyc"/>
</dbReference>
<dbReference type="GO" id="GO:0036125">
    <property type="term" value="C:fatty acid beta-oxidation multienzyme complex"/>
    <property type="evidence" value="ECO:0000314"/>
    <property type="project" value="EcoCyc"/>
</dbReference>
<dbReference type="GO" id="GO:0003988">
    <property type="term" value="F:acetyl-CoA C-acyltransferase activity"/>
    <property type="evidence" value="ECO:0000314"/>
    <property type="project" value="UniProtKB"/>
</dbReference>
<dbReference type="GO" id="GO:0006635">
    <property type="term" value="P:fatty acid beta-oxidation"/>
    <property type="evidence" value="ECO:0000314"/>
    <property type="project" value="ComplexPortal"/>
</dbReference>
<dbReference type="GO" id="GO:0009062">
    <property type="term" value="P:fatty acid catabolic process"/>
    <property type="evidence" value="ECO:0000315"/>
    <property type="project" value="EcoCyc"/>
</dbReference>
<dbReference type="GO" id="GO:0010124">
    <property type="term" value="P:phenylacetate catabolic process"/>
    <property type="evidence" value="ECO:0000318"/>
    <property type="project" value="GO_Central"/>
</dbReference>
<dbReference type="CDD" id="cd00751">
    <property type="entry name" value="thiolase"/>
    <property type="match status" value="1"/>
</dbReference>
<dbReference type="FunFam" id="3.40.47.10:FF:000010">
    <property type="entry name" value="Acetyl-CoA acetyltransferase (Thiolase)"/>
    <property type="match status" value="1"/>
</dbReference>
<dbReference type="Gene3D" id="3.40.47.10">
    <property type="match status" value="2"/>
</dbReference>
<dbReference type="HAMAP" id="MF_01620">
    <property type="entry name" value="FadA"/>
    <property type="match status" value="1"/>
</dbReference>
<dbReference type="InterPro" id="IPR012805">
    <property type="entry name" value="FadA"/>
</dbReference>
<dbReference type="InterPro" id="IPR002155">
    <property type="entry name" value="Thiolase"/>
</dbReference>
<dbReference type="InterPro" id="IPR016039">
    <property type="entry name" value="Thiolase-like"/>
</dbReference>
<dbReference type="InterPro" id="IPR050215">
    <property type="entry name" value="Thiolase-like_sf_Thiolase"/>
</dbReference>
<dbReference type="InterPro" id="IPR020615">
    <property type="entry name" value="Thiolase_acyl_enz_int_AS"/>
</dbReference>
<dbReference type="InterPro" id="IPR020610">
    <property type="entry name" value="Thiolase_AS"/>
</dbReference>
<dbReference type="InterPro" id="IPR020617">
    <property type="entry name" value="Thiolase_C"/>
</dbReference>
<dbReference type="InterPro" id="IPR020613">
    <property type="entry name" value="Thiolase_CS"/>
</dbReference>
<dbReference type="InterPro" id="IPR020616">
    <property type="entry name" value="Thiolase_N"/>
</dbReference>
<dbReference type="NCBIfam" id="TIGR01930">
    <property type="entry name" value="AcCoA-C-Actrans"/>
    <property type="match status" value="1"/>
</dbReference>
<dbReference type="NCBIfam" id="TIGR02445">
    <property type="entry name" value="fadA"/>
    <property type="match status" value="1"/>
</dbReference>
<dbReference type="NCBIfam" id="NF006510">
    <property type="entry name" value="PRK08947.1"/>
    <property type="match status" value="1"/>
</dbReference>
<dbReference type="PANTHER" id="PTHR43853:SF11">
    <property type="entry name" value="3-KETOACYL-COA THIOLASE FADA"/>
    <property type="match status" value="1"/>
</dbReference>
<dbReference type="PANTHER" id="PTHR43853">
    <property type="entry name" value="3-KETOACYL-COA THIOLASE, PEROXISOMAL"/>
    <property type="match status" value="1"/>
</dbReference>
<dbReference type="Pfam" id="PF02803">
    <property type="entry name" value="Thiolase_C"/>
    <property type="match status" value="1"/>
</dbReference>
<dbReference type="Pfam" id="PF00108">
    <property type="entry name" value="Thiolase_N"/>
    <property type="match status" value="1"/>
</dbReference>
<dbReference type="PIRSF" id="PIRSF000429">
    <property type="entry name" value="Ac-CoA_Ac_transf"/>
    <property type="match status" value="1"/>
</dbReference>
<dbReference type="SUPFAM" id="SSF53901">
    <property type="entry name" value="Thiolase-like"/>
    <property type="match status" value="2"/>
</dbReference>
<dbReference type="PROSITE" id="PS00098">
    <property type="entry name" value="THIOLASE_1"/>
    <property type="match status" value="1"/>
</dbReference>
<dbReference type="PROSITE" id="PS00737">
    <property type="entry name" value="THIOLASE_2"/>
    <property type="match status" value="1"/>
</dbReference>
<dbReference type="PROSITE" id="PS00099">
    <property type="entry name" value="THIOLASE_3"/>
    <property type="match status" value="1"/>
</dbReference>
<organism>
    <name type="scientific">Escherichia coli (strain K12)</name>
    <dbReference type="NCBI Taxonomy" id="83333"/>
    <lineage>
        <taxon>Bacteria</taxon>
        <taxon>Pseudomonadati</taxon>
        <taxon>Pseudomonadota</taxon>
        <taxon>Gammaproteobacteria</taxon>
        <taxon>Enterobacterales</taxon>
        <taxon>Enterobacteriaceae</taxon>
        <taxon>Escherichia</taxon>
    </lineage>
</organism>
<name>FADA_ECOLI</name>
<evidence type="ECO:0000250" key="1"/>
<evidence type="ECO:0000269" key="2">
    <source>
    </source>
</evidence>
<evidence type="ECO:0000269" key="3">
    <source>
    </source>
</evidence>
<evidence type="ECO:0000269" key="4">
    <source>
    </source>
</evidence>
<evidence type="ECO:0000305" key="5"/>
<sequence>MEQVVIVDAIRTPMGRSKGGAFRNVRAEDLSAHLMRSLLARNPALEAAALDDIYWGCVQQTLEQGFNIARNAALLAEVPHSVPAVTVNRLCGSSMQALHDAARMIMTGDAQACLVGGVEHMGHVPMSHGVDFHPGLSRNVAKAAGMMGLTAEMLARMHGISREMQDAFAARSHARAWAATQSAAFKNEIIPTGGHDADGVLKQFNYDEVIRPETTVEALATLRPAFDPVNGMVTAGTSSALSDGAAAMLVMSESRAHELGLKPRARVRSMAVVGCDPSIMGYGPVPASKLALKKAGLSASDIGVFEMNEAFAAQILPCIKDLGLIEQIDEKINLNGGAIALGHPLGCSGARISTTLLNLMERKDVQFGLATMCIGLGQGIATVFERV</sequence>
<protein>
    <recommendedName>
        <fullName>3-ketoacyl-CoA thiolase FadA</fullName>
        <ecNumber evidence="4">2.3.1.16</ecNumber>
    </recommendedName>
    <alternativeName>
        <fullName>Acetyl-CoA acyltransferase</fullName>
    </alternativeName>
    <alternativeName>
        <fullName>Beta-ketothiolase</fullName>
    </alternativeName>
    <alternativeName>
        <fullName>Fatty acid oxidation complex subunit beta</fullName>
    </alternativeName>
</protein>